<feature type="signal peptide">
    <location>
        <begin position="1"/>
        <end position="21"/>
    </location>
</feature>
<feature type="chain" id="PRO_0000016982" description="Beta-lactamase SHV-3">
    <location>
        <begin position="22"/>
        <end position="286"/>
    </location>
</feature>
<feature type="active site" description="Acyl-ester intermediate" evidence="2">
    <location>
        <position position="66"/>
    </location>
</feature>
<feature type="active site" description="Proton acceptor" evidence="1">
    <location>
        <position position="164"/>
    </location>
</feature>
<feature type="binding site" evidence="1">
    <location>
        <begin position="230"/>
        <end position="232"/>
    </location>
    <ligand>
        <name>substrate</name>
    </ligand>
</feature>
<feature type="disulfide bond" evidence="1">
    <location>
        <begin position="73"/>
        <end position="119"/>
    </location>
</feature>
<feature type="helix" evidence="5">
    <location>
        <begin position="25"/>
        <end position="36"/>
    </location>
</feature>
<feature type="strand" evidence="5">
    <location>
        <begin position="38"/>
        <end position="46"/>
    </location>
</feature>
<feature type="turn" evidence="5">
    <location>
        <begin position="47"/>
        <end position="49"/>
    </location>
</feature>
<feature type="strand" evidence="5">
    <location>
        <begin position="52"/>
        <end position="57"/>
    </location>
</feature>
<feature type="helix" evidence="5">
    <location>
        <begin position="65"/>
        <end position="67"/>
    </location>
</feature>
<feature type="helix" evidence="5">
    <location>
        <begin position="68"/>
        <end position="81"/>
    </location>
</feature>
<feature type="helix" evidence="5">
    <location>
        <begin position="95"/>
        <end position="97"/>
    </location>
</feature>
<feature type="helix" evidence="5">
    <location>
        <begin position="105"/>
        <end position="108"/>
    </location>
</feature>
<feature type="turn" evidence="5">
    <location>
        <begin position="109"/>
        <end position="111"/>
    </location>
</feature>
<feature type="helix" evidence="5">
    <location>
        <begin position="115"/>
        <end position="125"/>
    </location>
</feature>
<feature type="helix" evidence="5">
    <location>
        <begin position="128"/>
        <end position="137"/>
    </location>
</feature>
<feature type="helix" evidence="5">
    <location>
        <begin position="140"/>
        <end position="150"/>
    </location>
</feature>
<feature type="helix" evidence="5">
    <location>
        <begin position="164"/>
        <end position="166"/>
    </location>
</feature>
<feature type="helix" evidence="5">
    <location>
        <begin position="179"/>
        <end position="191"/>
    </location>
</feature>
<feature type="strand" evidence="5">
    <location>
        <begin position="192"/>
        <end position="195"/>
    </location>
</feature>
<feature type="helix" evidence="5">
    <location>
        <begin position="197"/>
        <end position="208"/>
    </location>
</feature>
<feature type="strand" evidence="5">
    <location>
        <begin position="211"/>
        <end position="213"/>
    </location>
</feature>
<feature type="helix" evidence="5">
    <location>
        <begin position="214"/>
        <end position="218"/>
    </location>
</feature>
<feature type="strand" evidence="5">
    <location>
        <begin position="226"/>
        <end position="234"/>
    </location>
</feature>
<feature type="turn" evidence="5">
    <location>
        <begin position="235"/>
        <end position="237"/>
    </location>
</feature>
<feature type="strand" evidence="5">
    <location>
        <begin position="238"/>
        <end position="247"/>
    </location>
</feature>
<feature type="strand" evidence="5">
    <location>
        <begin position="253"/>
        <end position="261"/>
    </location>
</feature>
<feature type="helix" evidence="5">
    <location>
        <begin position="266"/>
        <end position="282"/>
    </location>
</feature>
<comment type="function">
    <text>This enzyme hydrolyzes cefotaxime, ceftazidime and other broad spectrum cephalosporins.</text>
</comment>
<comment type="catalytic activity">
    <reaction evidence="2">
        <text>a beta-lactam + H2O = a substituted beta-amino acid</text>
        <dbReference type="Rhea" id="RHEA:20401"/>
        <dbReference type="ChEBI" id="CHEBI:15377"/>
        <dbReference type="ChEBI" id="CHEBI:35627"/>
        <dbReference type="ChEBI" id="CHEBI:140347"/>
        <dbReference type="EC" id="3.5.2.6"/>
    </reaction>
</comment>
<comment type="miscellaneous">
    <text evidence="4">The class A beta-lactamase family has a specific amino-acid numbering system, sometimes called Ambler or ABL numbering and often misspelt as Amber. A multiple sequence alignment was used to derive a consensus sequence and then the consensus was numbered taking into account insertions and deletions. This allows use of identical numbers, e.g. for active site residues, despite differences in protein length. UniProt always uses natural numbering of residues, hence there appear to be differences in numbering between this entry and some papers.</text>
</comment>
<comment type="similarity">
    <text evidence="3">Belongs to the class-A beta-lactamase family.</text>
</comment>
<keyword id="KW-0002">3D-structure</keyword>
<keyword id="KW-0046">Antibiotic resistance</keyword>
<keyword id="KW-1015">Disulfide bond</keyword>
<keyword id="KW-0378">Hydrolase</keyword>
<keyword id="KW-0614">Plasmid</keyword>
<keyword id="KW-0732">Signal</keyword>
<protein>
    <recommendedName>
        <fullName>Beta-lactamase SHV-3</fullName>
        <ecNumber>3.5.2.6</ecNumber>
    </recommendedName>
</protein>
<sequence>MRYIRLCIISLLATLPLAVHASPQPLEQIKLSESQLSGRVGMIEMDLASGRTLTAWRADERFPMMSTFKVVLCGAVLARVDAGDEQLERKIHYRQQDLVDYSPVSEKHLADGMTVGELCAAAITMSDNSAANLLLATVGGPAGLTAFLRQIGDNVTRLDRWETELNEALPGDARDTTTPASMAATLRKLLTSQRLSARSQLQLLQWMVDDRVAGPLIRSVLPAGWFIADKTGASERGARGIVALLGPNNKAERIVVIYLRDTPASMAERNQQIAGIGAALIEHWQR</sequence>
<reference key="1">
    <citation type="journal article" date="1989" name="Antimicrob. Agents Chemother.">
        <title>Molecular characterization of the gene encoding SHV-3 beta-lactamase responsible for transferable cefotaxime resistance in clinical isolates of Klebsiella pneumoniae.</title>
        <authorList>
            <person name="Nicolas M.H."/>
            <person name="Jarlier V."/>
            <person name="Honore N."/>
            <person name="Philippon A."/>
            <person name="Cole S.T."/>
        </authorList>
    </citation>
    <scope>NUCLEOTIDE SEQUENCE [GENOMIC DNA]</scope>
    <source>
        <strain>86-4</strain>
        <plasmid>pUD18</plasmid>
    </source>
</reference>
<reference key="2">
    <citation type="journal article" date="1991" name="Biochem. J.">
        <title>A standard numbering scheme for the class A beta-lactamases.</title>
        <authorList>
            <person name="Ambler R.P."/>
            <person name="Coulson A.F."/>
            <person name="Frere J.M."/>
            <person name="Ghuysen J.M."/>
            <person name="Joris B."/>
            <person name="Forsman M."/>
            <person name="Levesque R.C."/>
            <person name="Tiraby G."/>
            <person name="Waley S.G."/>
        </authorList>
    </citation>
    <scope>AMINO ACID NUMBERING SCHEME</scope>
</reference>
<dbReference type="EC" id="3.5.2.6"/>
<dbReference type="PIR" id="A37200">
    <property type="entry name" value="A37200"/>
</dbReference>
<dbReference type="RefSeq" id="WP_063864673.1">
    <property type="nucleotide sequence ID" value="NG_050068.1"/>
</dbReference>
<dbReference type="PDB" id="1N9B">
    <property type="method" value="X-ray"/>
    <property type="resolution" value="0.90 A"/>
    <property type="chains" value="A=22-286"/>
</dbReference>
<dbReference type="PDBsum" id="1N9B"/>
<dbReference type="SMR" id="P30896"/>
<dbReference type="CARD" id="ARO:3001062">
    <property type="molecule name" value="SHV-3"/>
    <property type="mechanism identifier" value="ARO:0001004"/>
    <property type="mechanism name" value="antibiotic inactivation"/>
</dbReference>
<dbReference type="KEGG" id="ag:P30896"/>
<dbReference type="EvolutionaryTrace" id="P30896"/>
<dbReference type="GO" id="GO:0008800">
    <property type="term" value="F:beta-lactamase activity"/>
    <property type="evidence" value="ECO:0007669"/>
    <property type="project" value="UniProtKB-EC"/>
</dbReference>
<dbReference type="GO" id="GO:0030655">
    <property type="term" value="P:beta-lactam antibiotic catabolic process"/>
    <property type="evidence" value="ECO:0007669"/>
    <property type="project" value="InterPro"/>
</dbReference>
<dbReference type="GO" id="GO:0046677">
    <property type="term" value="P:response to antibiotic"/>
    <property type="evidence" value="ECO:0007669"/>
    <property type="project" value="UniProtKB-KW"/>
</dbReference>
<dbReference type="Gene3D" id="3.40.710.10">
    <property type="entry name" value="DD-peptidase/beta-lactamase superfamily"/>
    <property type="match status" value="1"/>
</dbReference>
<dbReference type="InterPro" id="IPR012338">
    <property type="entry name" value="Beta-lactam/transpept-like"/>
</dbReference>
<dbReference type="InterPro" id="IPR045155">
    <property type="entry name" value="Beta-lactam_cat"/>
</dbReference>
<dbReference type="InterPro" id="IPR000871">
    <property type="entry name" value="Beta-lactam_class-A"/>
</dbReference>
<dbReference type="InterPro" id="IPR023650">
    <property type="entry name" value="Beta-lactam_class-A_AS"/>
</dbReference>
<dbReference type="NCBIfam" id="NF033103">
    <property type="entry name" value="bla_class_A"/>
    <property type="match status" value="1"/>
</dbReference>
<dbReference type="NCBIfam" id="NF000285">
    <property type="entry name" value="SHV"/>
    <property type="match status" value="1"/>
</dbReference>
<dbReference type="NCBIfam" id="NF012143">
    <property type="entry name" value="SHV_LEN_OKP"/>
    <property type="match status" value="1"/>
</dbReference>
<dbReference type="PANTHER" id="PTHR35333">
    <property type="entry name" value="BETA-LACTAMASE"/>
    <property type="match status" value="1"/>
</dbReference>
<dbReference type="PANTHER" id="PTHR35333:SF3">
    <property type="entry name" value="BETA-LACTAMASE-TYPE TRANSPEPTIDASE FOLD CONTAINING PROTEIN"/>
    <property type="match status" value="1"/>
</dbReference>
<dbReference type="Pfam" id="PF13354">
    <property type="entry name" value="Beta-lactamase2"/>
    <property type="match status" value="1"/>
</dbReference>
<dbReference type="PRINTS" id="PR00118">
    <property type="entry name" value="BLACTAMASEA"/>
</dbReference>
<dbReference type="SUPFAM" id="SSF56601">
    <property type="entry name" value="beta-lactamase/transpeptidase-like"/>
    <property type="match status" value="1"/>
</dbReference>
<dbReference type="PROSITE" id="PS00146">
    <property type="entry name" value="BETA_LACTAMASE_A"/>
    <property type="match status" value="1"/>
</dbReference>
<organism>
    <name type="scientific">Klebsiella pneumoniae</name>
    <dbReference type="NCBI Taxonomy" id="573"/>
    <lineage>
        <taxon>Bacteria</taxon>
        <taxon>Pseudomonadati</taxon>
        <taxon>Pseudomonadota</taxon>
        <taxon>Gammaproteobacteria</taxon>
        <taxon>Enterobacterales</taxon>
        <taxon>Enterobacteriaceae</taxon>
        <taxon>Klebsiella/Raoultella group</taxon>
        <taxon>Klebsiella</taxon>
        <taxon>Klebsiella pneumoniae complex</taxon>
    </lineage>
</organism>
<accession>P30896</accession>
<proteinExistence type="evidence at protein level"/>
<evidence type="ECO:0000250" key="1"/>
<evidence type="ECO:0000255" key="2">
    <source>
        <dbReference type="PROSITE-ProRule" id="PRU10101"/>
    </source>
</evidence>
<evidence type="ECO:0000305" key="3"/>
<evidence type="ECO:0000305" key="4">
    <source>
    </source>
</evidence>
<evidence type="ECO:0007829" key="5">
    <source>
        <dbReference type="PDB" id="1N9B"/>
    </source>
</evidence>
<gene>
    <name type="primary">bla</name>
    <name type="synonym">shv3</name>
</gene>
<name>BLA3_KLEPN</name>
<geneLocation type="plasmid">
    <name>pUD18</name>
</geneLocation>